<name>GATC_CORGL</name>
<reference key="1">
    <citation type="journal article" date="2003" name="Appl. Microbiol. Biotechnol.">
        <title>The Corynebacterium glutamicum genome: features and impacts on biotechnological processes.</title>
        <authorList>
            <person name="Ikeda M."/>
            <person name="Nakagawa S."/>
        </authorList>
    </citation>
    <scope>NUCLEOTIDE SEQUENCE [LARGE SCALE GENOMIC DNA]</scope>
    <source>
        <strain>ATCC 13032 / DSM 20300 / JCM 1318 / BCRC 11384 / CCUG 27702 / LMG 3730 / NBRC 12168 / NCIMB 10025 / NRRL B-2784 / 534</strain>
    </source>
</reference>
<reference key="2">
    <citation type="journal article" date="2003" name="J. Biotechnol.">
        <title>The complete Corynebacterium glutamicum ATCC 13032 genome sequence and its impact on the production of L-aspartate-derived amino acids and vitamins.</title>
        <authorList>
            <person name="Kalinowski J."/>
            <person name="Bathe B."/>
            <person name="Bartels D."/>
            <person name="Bischoff N."/>
            <person name="Bott M."/>
            <person name="Burkovski A."/>
            <person name="Dusch N."/>
            <person name="Eggeling L."/>
            <person name="Eikmanns B.J."/>
            <person name="Gaigalat L."/>
            <person name="Goesmann A."/>
            <person name="Hartmann M."/>
            <person name="Huthmacher K."/>
            <person name="Kraemer R."/>
            <person name="Linke B."/>
            <person name="McHardy A.C."/>
            <person name="Meyer F."/>
            <person name="Moeckel B."/>
            <person name="Pfefferle W."/>
            <person name="Puehler A."/>
            <person name="Rey D.A."/>
            <person name="Rueckert C."/>
            <person name="Rupp O."/>
            <person name="Sahm H."/>
            <person name="Wendisch V.F."/>
            <person name="Wiegraebe I."/>
            <person name="Tauch A."/>
        </authorList>
    </citation>
    <scope>NUCLEOTIDE SEQUENCE [LARGE SCALE GENOMIC DNA]</scope>
    <source>
        <strain>ATCC 13032 / DSM 20300 / JCM 1318 / BCRC 11384 / CCUG 27702 / LMG 3730 / NBRC 12168 / NCIMB 10025 / NRRL B-2784 / 534</strain>
    </source>
</reference>
<gene>
    <name evidence="1" type="primary">gatC</name>
    <name type="ordered locus">Cgl1246</name>
    <name type="ordered locus">cg1403</name>
</gene>
<comment type="function">
    <text evidence="1">Allows the formation of correctly charged Asn-tRNA(Asn) or Gln-tRNA(Gln) through the transamidation of misacylated Asp-tRNA(Asn) or Glu-tRNA(Gln) in organisms which lack either or both of asparaginyl-tRNA or glutaminyl-tRNA synthetases. The reaction takes place in the presence of glutamine and ATP through an activated phospho-Asp-tRNA(Asn) or phospho-Glu-tRNA(Gln).</text>
</comment>
<comment type="catalytic activity">
    <reaction evidence="1">
        <text>L-glutamyl-tRNA(Gln) + L-glutamine + ATP + H2O = L-glutaminyl-tRNA(Gln) + L-glutamate + ADP + phosphate + H(+)</text>
        <dbReference type="Rhea" id="RHEA:17521"/>
        <dbReference type="Rhea" id="RHEA-COMP:9681"/>
        <dbReference type="Rhea" id="RHEA-COMP:9684"/>
        <dbReference type="ChEBI" id="CHEBI:15377"/>
        <dbReference type="ChEBI" id="CHEBI:15378"/>
        <dbReference type="ChEBI" id="CHEBI:29985"/>
        <dbReference type="ChEBI" id="CHEBI:30616"/>
        <dbReference type="ChEBI" id="CHEBI:43474"/>
        <dbReference type="ChEBI" id="CHEBI:58359"/>
        <dbReference type="ChEBI" id="CHEBI:78520"/>
        <dbReference type="ChEBI" id="CHEBI:78521"/>
        <dbReference type="ChEBI" id="CHEBI:456216"/>
    </reaction>
</comment>
<comment type="catalytic activity">
    <reaction evidence="1">
        <text>L-aspartyl-tRNA(Asn) + L-glutamine + ATP + H2O = L-asparaginyl-tRNA(Asn) + L-glutamate + ADP + phosphate + 2 H(+)</text>
        <dbReference type="Rhea" id="RHEA:14513"/>
        <dbReference type="Rhea" id="RHEA-COMP:9674"/>
        <dbReference type="Rhea" id="RHEA-COMP:9677"/>
        <dbReference type="ChEBI" id="CHEBI:15377"/>
        <dbReference type="ChEBI" id="CHEBI:15378"/>
        <dbReference type="ChEBI" id="CHEBI:29985"/>
        <dbReference type="ChEBI" id="CHEBI:30616"/>
        <dbReference type="ChEBI" id="CHEBI:43474"/>
        <dbReference type="ChEBI" id="CHEBI:58359"/>
        <dbReference type="ChEBI" id="CHEBI:78515"/>
        <dbReference type="ChEBI" id="CHEBI:78516"/>
        <dbReference type="ChEBI" id="CHEBI:456216"/>
    </reaction>
</comment>
<comment type="subunit">
    <text evidence="1">Heterotrimer of A, B and C subunits.</text>
</comment>
<comment type="similarity">
    <text evidence="1">Belongs to the GatC family.</text>
</comment>
<evidence type="ECO:0000255" key="1">
    <source>
        <dbReference type="HAMAP-Rule" id="MF_00122"/>
    </source>
</evidence>
<accession>Q8NR18</accession>
<protein>
    <recommendedName>
        <fullName evidence="1">Aspartyl/glutamyl-tRNA(Asn/Gln) amidotransferase subunit C</fullName>
        <shortName evidence="1">Asp/Glu-ADT subunit C</shortName>
        <ecNumber evidence="1">6.3.5.-</ecNumber>
    </recommendedName>
</protein>
<feature type="chain" id="PRO_0000105296" description="Aspartyl/glutamyl-tRNA(Asn/Gln) amidotransferase subunit C">
    <location>
        <begin position="1"/>
        <end position="99"/>
    </location>
</feature>
<organism>
    <name type="scientific">Corynebacterium glutamicum (strain ATCC 13032 / DSM 20300 / JCM 1318 / BCRC 11384 / CCUG 27702 / LMG 3730 / NBRC 12168 / NCIMB 10025 / NRRL B-2784 / 534)</name>
    <dbReference type="NCBI Taxonomy" id="196627"/>
    <lineage>
        <taxon>Bacteria</taxon>
        <taxon>Bacillati</taxon>
        <taxon>Actinomycetota</taxon>
        <taxon>Actinomycetes</taxon>
        <taxon>Mycobacteriales</taxon>
        <taxon>Corynebacteriaceae</taxon>
        <taxon>Corynebacterium</taxon>
    </lineage>
</organism>
<dbReference type="EC" id="6.3.5.-" evidence="1"/>
<dbReference type="EMBL" id="BA000036">
    <property type="protein sequence ID" value="BAB98639.1"/>
    <property type="molecule type" value="Genomic_DNA"/>
</dbReference>
<dbReference type="EMBL" id="BX927151">
    <property type="protein sequence ID" value="CAF19949.1"/>
    <property type="molecule type" value="Genomic_DNA"/>
</dbReference>
<dbReference type="RefSeq" id="NP_600469.1">
    <property type="nucleotide sequence ID" value="NC_003450.3"/>
</dbReference>
<dbReference type="RefSeq" id="WP_003854761.1">
    <property type="nucleotide sequence ID" value="NC_006958.1"/>
</dbReference>
<dbReference type="SMR" id="Q8NR18"/>
<dbReference type="STRING" id="196627.cg1403"/>
<dbReference type="GeneID" id="1019228"/>
<dbReference type="KEGG" id="cgb:cg1403"/>
<dbReference type="KEGG" id="cgl:Cgl1246"/>
<dbReference type="PATRIC" id="fig|196627.13.peg.1223"/>
<dbReference type="eggNOG" id="COG0721">
    <property type="taxonomic scope" value="Bacteria"/>
</dbReference>
<dbReference type="HOGENOM" id="CLU_105899_1_0_11"/>
<dbReference type="OrthoDB" id="5295223at2"/>
<dbReference type="BioCyc" id="CORYNE:G18NG-10819-MONOMER"/>
<dbReference type="Proteomes" id="UP000000582">
    <property type="component" value="Chromosome"/>
</dbReference>
<dbReference type="Proteomes" id="UP000001009">
    <property type="component" value="Chromosome"/>
</dbReference>
<dbReference type="GO" id="GO:0050566">
    <property type="term" value="F:asparaginyl-tRNA synthase (glutamine-hydrolyzing) activity"/>
    <property type="evidence" value="ECO:0007669"/>
    <property type="project" value="RHEA"/>
</dbReference>
<dbReference type="GO" id="GO:0005524">
    <property type="term" value="F:ATP binding"/>
    <property type="evidence" value="ECO:0007669"/>
    <property type="project" value="UniProtKB-KW"/>
</dbReference>
<dbReference type="GO" id="GO:0050567">
    <property type="term" value="F:glutaminyl-tRNA synthase (glutamine-hydrolyzing) activity"/>
    <property type="evidence" value="ECO:0007669"/>
    <property type="project" value="UniProtKB-UniRule"/>
</dbReference>
<dbReference type="GO" id="GO:0070681">
    <property type="term" value="P:glutaminyl-tRNAGln biosynthesis via transamidation"/>
    <property type="evidence" value="ECO:0007669"/>
    <property type="project" value="TreeGrafter"/>
</dbReference>
<dbReference type="GO" id="GO:0006450">
    <property type="term" value="P:regulation of translational fidelity"/>
    <property type="evidence" value="ECO:0007669"/>
    <property type="project" value="InterPro"/>
</dbReference>
<dbReference type="GO" id="GO:0006412">
    <property type="term" value="P:translation"/>
    <property type="evidence" value="ECO:0007669"/>
    <property type="project" value="UniProtKB-UniRule"/>
</dbReference>
<dbReference type="Gene3D" id="1.10.20.60">
    <property type="entry name" value="Glu-tRNAGln amidotransferase C subunit, N-terminal domain"/>
    <property type="match status" value="1"/>
</dbReference>
<dbReference type="HAMAP" id="MF_00122">
    <property type="entry name" value="GatC"/>
    <property type="match status" value="1"/>
</dbReference>
<dbReference type="InterPro" id="IPR036113">
    <property type="entry name" value="Asp/Glu-ADT_sf_sub_c"/>
</dbReference>
<dbReference type="InterPro" id="IPR003837">
    <property type="entry name" value="GatC"/>
</dbReference>
<dbReference type="NCBIfam" id="TIGR00135">
    <property type="entry name" value="gatC"/>
    <property type="match status" value="1"/>
</dbReference>
<dbReference type="PANTHER" id="PTHR15004">
    <property type="entry name" value="GLUTAMYL-TRNA(GLN) AMIDOTRANSFERASE SUBUNIT C, MITOCHONDRIAL"/>
    <property type="match status" value="1"/>
</dbReference>
<dbReference type="PANTHER" id="PTHR15004:SF0">
    <property type="entry name" value="GLUTAMYL-TRNA(GLN) AMIDOTRANSFERASE SUBUNIT C, MITOCHONDRIAL"/>
    <property type="match status" value="1"/>
</dbReference>
<dbReference type="Pfam" id="PF02686">
    <property type="entry name" value="GatC"/>
    <property type="match status" value="1"/>
</dbReference>
<dbReference type="SUPFAM" id="SSF141000">
    <property type="entry name" value="Glu-tRNAGln amidotransferase C subunit"/>
    <property type="match status" value="1"/>
</dbReference>
<proteinExistence type="inferred from homology"/>
<keyword id="KW-0067">ATP-binding</keyword>
<keyword id="KW-0436">Ligase</keyword>
<keyword id="KW-0547">Nucleotide-binding</keyword>
<keyword id="KW-0648">Protein biosynthesis</keyword>
<keyword id="KW-1185">Reference proteome</keyword>
<sequence length="99" mass="10636">MPEISRDQVAHLAKLSRLALTEEELEQFAGQIDDIVGYVSAVQNVDAAGVEPMSHPHSIATTMREDVVHKTLDAAAALDQAPAVEDGRFMVPQILGEGD</sequence>